<name>Y577_METJA</name>
<protein>
    <recommendedName>
        <fullName>Universal stress protein MJ0577</fullName>
        <shortName>USP MJ0577</shortName>
    </recommendedName>
</protein>
<accession>Q57997</accession>
<sequence>MSVMYKKILYPTDFSETAEIALKHVKAFKTLKAEEVILLHVIDEREIKKRDIFSLLLGVAGLNKSVEEFENELKNKLTEEAKNKMENIKKELEDVGFKVKDIIVVGIPHEEIVKIAEDEGVDIIIMGSHGKTNLKEILLGSVTENVIKKSNKPVLVVKRKNS</sequence>
<dbReference type="EMBL" id="L77117">
    <property type="protein sequence ID" value="AAB98568.1"/>
    <property type="molecule type" value="Genomic_DNA"/>
</dbReference>
<dbReference type="PIR" id="A64372">
    <property type="entry name" value="A64372"/>
</dbReference>
<dbReference type="PDB" id="1MJH">
    <property type="method" value="X-ray"/>
    <property type="resolution" value="1.70 A"/>
    <property type="chains" value="A/B=1-162"/>
</dbReference>
<dbReference type="PDBsum" id="1MJH"/>
<dbReference type="SMR" id="Q57997"/>
<dbReference type="FunCoup" id="Q57997">
    <property type="interactions" value="9"/>
</dbReference>
<dbReference type="STRING" id="243232.MJ_0577"/>
<dbReference type="PaxDb" id="243232-MJ_0577"/>
<dbReference type="EnsemblBacteria" id="AAB98568">
    <property type="protein sequence ID" value="AAB98568"/>
    <property type="gene ID" value="MJ_0577"/>
</dbReference>
<dbReference type="KEGG" id="mja:MJ_0577"/>
<dbReference type="eggNOG" id="arCOG00449">
    <property type="taxonomic scope" value="Archaea"/>
</dbReference>
<dbReference type="HOGENOM" id="CLU_049301_11_2_2"/>
<dbReference type="InParanoid" id="Q57997"/>
<dbReference type="PhylomeDB" id="Q57997"/>
<dbReference type="EvolutionaryTrace" id="Q57997"/>
<dbReference type="Proteomes" id="UP000000805">
    <property type="component" value="Chromosome"/>
</dbReference>
<dbReference type="GO" id="GO:0005737">
    <property type="term" value="C:cytoplasm"/>
    <property type="evidence" value="ECO:0007669"/>
    <property type="project" value="UniProtKB-SubCell"/>
</dbReference>
<dbReference type="GO" id="GO:0005524">
    <property type="term" value="F:ATP binding"/>
    <property type="evidence" value="ECO:0007669"/>
    <property type="project" value="UniProtKB-KW"/>
</dbReference>
<dbReference type="CDD" id="cd00293">
    <property type="entry name" value="USP-like"/>
    <property type="match status" value="1"/>
</dbReference>
<dbReference type="Gene3D" id="3.40.50.620">
    <property type="entry name" value="HUPs"/>
    <property type="match status" value="1"/>
</dbReference>
<dbReference type="InterPro" id="IPR014729">
    <property type="entry name" value="Rossmann-like_a/b/a_fold"/>
</dbReference>
<dbReference type="InterPro" id="IPR006015">
    <property type="entry name" value="Universal_stress_UspA"/>
</dbReference>
<dbReference type="InterPro" id="IPR006016">
    <property type="entry name" value="UspA"/>
</dbReference>
<dbReference type="PANTHER" id="PTHR46268">
    <property type="entry name" value="STRESS RESPONSE PROTEIN NHAX"/>
    <property type="match status" value="1"/>
</dbReference>
<dbReference type="PANTHER" id="PTHR46268:SF26">
    <property type="entry name" value="UNIVERSAL STRESS PROTEIN MJ0577"/>
    <property type="match status" value="1"/>
</dbReference>
<dbReference type="Pfam" id="PF00582">
    <property type="entry name" value="Usp"/>
    <property type="match status" value="1"/>
</dbReference>
<dbReference type="PRINTS" id="PR01438">
    <property type="entry name" value="UNVRSLSTRESS"/>
</dbReference>
<dbReference type="SUPFAM" id="SSF52402">
    <property type="entry name" value="Adenine nucleotide alpha hydrolases-like"/>
    <property type="match status" value="1"/>
</dbReference>
<reference key="1">
    <citation type="journal article" date="1996" name="Science">
        <title>Complete genome sequence of the methanogenic archaeon, Methanococcus jannaschii.</title>
        <authorList>
            <person name="Bult C.J."/>
            <person name="White O."/>
            <person name="Olsen G.J."/>
            <person name="Zhou L."/>
            <person name="Fleischmann R.D."/>
            <person name="Sutton G.G."/>
            <person name="Blake J.A."/>
            <person name="FitzGerald L.M."/>
            <person name="Clayton R.A."/>
            <person name="Gocayne J.D."/>
            <person name="Kerlavage A.R."/>
            <person name="Dougherty B.A."/>
            <person name="Tomb J.-F."/>
            <person name="Adams M.D."/>
            <person name="Reich C.I."/>
            <person name="Overbeek R."/>
            <person name="Kirkness E.F."/>
            <person name="Weinstock K.G."/>
            <person name="Merrick J.M."/>
            <person name="Glodek A."/>
            <person name="Scott J.L."/>
            <person name="Geoghagen N.S.M."/>
            <person name="Weidman J.F."/>
            <person name="Fuhrmann J.L."/>
            <person name="Nguyen D."/>
            <person name="Utterback T.R."/>
            <person name="Kelley J.M."/>
            <person name="Peterson J.D."/>
            <person name="Sadow P.W."/>
            <person name="Hanna M.C."/>
            <person name="Cotton M.D."/>
            <person name="Roberts K.M."/>
            <person name="Hurst M.A."/>
            <person name="Kaine B.P."/>
            <person name="Borodovsky M."/>
            <person name="Klenk H.-P."/>
            <person name="Fraser C.M."/>
            <person name="Smith H.O."/>
            <person name="Woese C.R."/>
            <person name="Venter J.C."/>
        </authorList>
    </citation>
    <scope>NUCLEOTIDE SEQUENCE [LARGE SCALE GENOMIC DNA]</scope>
    <source>
        <strain>ATCC 43067 / DSM 2661 / JAL-1 / JCM 10045 / NBRC 100440</strain>
    </source>
</reference>
<reference key="2">
    <citation type="journal article" date="1998" name="Proc. Natl. Acad. Sci. U.S.A.">
        <title>Structure-based assignment of the biochemical function of a hypothetical protein: a test case of structural genomics.</title>
        <authorList>
            <person name="Zarembinski T.I."/>
            <person name="Hung L.-W."/>
            <person name="Mueller-Dieckmann H.-J."/>
            <person name="Kim K.-K."/>
            <person name="Yokota H."/>
            <person name="Kim R."/>
            <person name="Kim S.-H."/>
        </authorList>
    </citation>
    <scope>X-RAY CRYSTALLOGRAPHY (1.70 ANGSTROMS) IN COMPLEX WITH ATP</scope>
</reference>
<gene>
    <name type="ordered locus">MJ0577</name>
</gene>
<keyword id="KW-0002">3D-structure</keyword>
<keyword id="KW-0067">ATP-binding</keyword>
<keyword id="KW-0963">Cytoplasm</keyword>
<keyword id="KW-0547">Nucleotide-binding</keyword>
<keyword id="KW-1185">Reference proteome</keyword>
<proteinExistence type="evidence at protein level"/>
<feature type="chain" id="PRO_0000147446" description="Universal stress protein MJ0577">
    <location>
        <begin position="1"/>
        <end position="162"/>
    </location>
</feature>
<feature type="binding site" evidence="1 3">
    <location>
        <position position="11"/>
    </location>
    <ligand>
        <name>ATP</name>
        <dbReference type="ChEBI" id="CHEBI:30616"/>
    </ligand>
</feature>
<feature type="binding site" evidence="1 3">
    <location>
        <position position="41"/>
    </location>
    <ligand>
        <name>ATP</name>
        <dbReference type="ChEBI" id="CHEBI:30616"/>
    </ligand>
</feature>
<feature type="binding site" evidence="1 3">
    <location>
        <begin position="127"/>
        <end position="133"/>
    </location>
    <ligand>
        <name>ATP</name>
        <dbReference type="ChEBI" id="CHEBI:30616"/>
    </ligand>
</feature>
<feature type="binding site" evidence="1 3">
    <location>
        <begin position="141"/>
        <end position="143"/>
    </location>
    <ligand>
        <name>ATP</name>
        <dbReference type="ChEBI" id="CHEBI:30616"/>
    </ligand>
</feature>
<feature type="strand" evidence="4">
    <location>
        <begin position="7"/>
        <end position="11"/>
    </location>
</feature>
<feature type="helix" evidence="4">
    <location>
        <begin position="16"/>
        <end position="27"/>
    </location>
</feature>
<feature type="strand" evidence="4">
    <location>
        <begin position="35"/>
        <end position="43"/>
    </location>
</feature>
<feature type="helix" evidence="4">
    <location>
        <begin position="44"/>
        <end position="46"/>
    </location>
</feature>
<feature type="helix" evidence="4">
    <location>
        <begin position="67"/>
        <end position="94"/>
    </location>
</feature>
<feature type="strand" evidence="4">
    <location>
        <begin position="98"/>
        <end position="106"/>
    </location>
</feature>
<feature type="helix" evidence="4">
    <location>
        <begin position="108"/>
        <end position="118"/>
    </location>
</feature>
<feature type="strand" evidence="4">
    <location>
        <begin position="122"/>
        <end position="128"/>
    </location>
</feature>
<feature type="helix" evidence="4">
    <location>
        <begin position="141"/>
        <end position="149"/>
    </location>
</feature>
<feature type="strand" evidence="4">
    <location>
        <begin position="154"/>
        <end position="157"/>
    </location>
</feature>
<comment type="cofactor">
    <cofactor>
        <name>Mn(2+)</name>
        <dbReference type="ChEBI" id="CHEBI:29035"/>
    </cofactor>
    <text>Binds 1 Mn(2+) ion per subunit.</text>
</comment>
<comment type="subunit">
    <text>Homodimer.</text>
</comment>
<comment type="subcellular location">
    <subcellularLocation>
        <location>Cytoplasm</location>
    </subcellularLocation>
</comment>
<comment type="similarity">
    <text evidence="2">Belongs to the universal stress protein A family.</text>
</comment>
<evidence type="ECO:0000269" key="1">
    <source>
    </source>
</evidence>
<evidence type="ECO:0000305" key="2"/>
<evidence type="ECO:0007744" key="3">
    <source>
        <dbReference type="PDB" id="1MJH"/>
    </source>
</evidence>
<evidence type="ECO:0007829" key="4">
    <source>
        <dbReference type="PDB" id="1MJH"/>
    </source>
</evidence>
<organism>
    <name type="scientific">Methanocaldococcus jannaschii (strain ATCC 43067 / DSM 2661 / JAL-1 / JCM 10045 / NBRC 100440)</name>
    <name type="common">Methanococcus jannaschii</name>
    <dbReference type="NCBI Taxonomy" id="243232"/>
    <lineage>
        <taxon>Archaea</taxon>
        <taxon>Methanobacteriati</taxon>
        <taxon>Methanobacteriota</taxon>
        <taxon>Methanomada group</taxon>
        <taxon>Methanococci</taxon>
        <taxon>Methanococcales</taxon>
        <taxon>Methanocaldococcaceae</taxon>
        <taxon>Methanocaldococcus</taxon>
    </lineage>
</organism>